<reference key="1">
    <citation type="journal article" date="2008" name="J. Bacteriol.">
        <title>Complete genome sequence of Leuconostoc citreum KM20.</title>
        <authorList>
            <person name="Kim J.F."/>
            <person name="Jeong H."/>
            <person name="Lee J.-S."/>
            <person name="Choi S.-H."/>
            <person name="Ha M."/>
            <person name="Hur C.-G."/>
            <person name="Kim J.-S."/>
            <person name="Lee S."/>
            <person name="Park H.-S."/>
            <person name="Park Y.-H."/>
            <person name="Oh T.K."/>
        </authorList>
    </citation>
    <scope>NUCLEOTIDE SEQUENCE [LARGE SCALE GENOMIC DNA]</scope>
    <source>
        <strain>KM20</strain>
    </source>
</reference>
<gene>
    <name evidence="1" type="primary">obg</name>
    <name type="ordered locus">LCK_01335</name>
</gene>
<feature type="chain" id="PRO_0000386020" description="GTPase Obg">
    <location>
        <begin position="1"/>
        <end position="439"/>
    </location>
</feature>
<feature type="domain" description="Obg" evidence="3">
    <location>
        <begin position="1"/>
        <end position="159"/>
    </location>
</feature>
<feature type="domain" description="OBG-type G" evidence="1">
    <location>
        <begin position="160"/>
        <end position="336"/>
    </location>
</feature>
<feature type="domain" description="OCT" evidence="2">
    <location>
        <begin position="358"/>
        <end position="439"/>
    </location>
</feature>
<feature type="binding site" evidence="1">
    <location>
        <begin position="166"/>
        <end position="173"/>
    </location>
    <ligand>
        <name>GTP</name>
        <dbReference type="ChEBI" id="CHEBI:37565"/>
    </ligand>
</feature>
<feature type="binding site" evidence="1">
    <location>
        <position position="173"/>
    </location>
    <ligand>
        <name>Mg(2+)</name>
        <dbReference type="ChEBI" id="CHEBI:18420"/>
    </ligand>
</feature>
<feature type="binding site" evidence="1">
    <location>
        <begin position="191"/>
        <end position="195"/>
    </location>
    <ligand>
        <name>GTP</name>
        <dbReference type="ChEBI" id="CHEBI:37565"/>
    </ligand>
</feature>
<feature type="binding site" evidence="1">
    <location>
        <position position="193"/>
    </location>
    <ligand>
        <name>Mg(2+)</name>
        <dbReference type="ChEBI" id="CHEBI:18420"/>
    </ligand>
</feature>
<feature type="binding site" evidence="1">
    <location>
        <begin position="213"/>
        <end position="216"/>
    </location>
    <ligand>
        <name>GTP</name>
        <dbReference type="ChEBI" id="CHEBI:37565"/>
    </ligand>
</feature>
<feature type="binding site" evidence="1">
    <location>
        <begin position="283"/>
        <end position="286"/>
    </location>
    <ligand>
        <name>GTP</name>
        <dbReference type="ChEBI" id="CHEBI:37565"/>
    </ligand>
</feature>
<feature type="binding site" evidence="1">
    <location>
        <begin position="317"/>
        <end position="319"/>
    </location>
    <ligand>
        <name>GTP</name>
        <dbReference type="ChEBI" id="CHEBI:37565"/>
    </ligand>
</feature>
<protein>
    <recommendedName>
        <fullName evidence="1">GTPase Obg</fullName>
        <ecNumber evidence="1">3.6.5.-</ecNumber>
    </recommendedName>
    <alternativeName>
        <fullName evidence="1">GTP-binding protein Obg</fullName>
    </alternativeName>
</protein>
<accession>B1N057</accession>
<proteinExistence type="inferred from homology"/>
<keyword id="KW-0963">Cytoplasm</keyword>
<keyword id="KW-0342">GTP-binding</keyword>
<keyword id="KW-0378">Hydrolase</keyword>
<keyword id="KW-0460">Magnesium</keyword>
<keyword id="KW-0479">Metal-binding</keyword>
<keyword id="KW-0547">Nucleotide-binding</keyword>
<keyword id="KW-1185">Reference proteome</keyword>
<name>OBG_LEUCK</name>
<organism>
    <name type="scientific">Leuconostoc citreum (strain KM20)</name>
    <dbReference type="NCBI Taxonomy" id="349519"/>
    <lineage>
        <taxon>Bacteria</taxon>
        <taxon>Bacillati</taxon>
        <taxon>Bacillota</taxon>
        <taxon>Bacilli</taxon>
        <taxon>Lactobacillales</taxon>
        <taxon>Lactobacillaceae</taxon>
        <taxon>Leuconostoc</taxon>
    </lineage>
</organism>
<comment type="function">
    <text evidence="1">An essential GTPase which binds GTP, GDP and possibly (p)ppGpp with moderate affinity, with high nucleotide exchange rates and a fairly low GTP hydrolysis rate. Plays a role in control of the cell cycle, stress response, ribosome biogenesis and in those bacteria that undergo differentiation, in morphogenesis control.</text>
</comment>
<comment type="cofactor">
    <cofactor evidence="1">
        <name>Mg(2+)</name>
        <dbReference type="ChEBI" id="CHEBI:18420"/>
    </cofactor>
</comment>
<comment type="subunit">
    <text evidence="1">Monomer.</text>
</comment>
<comment type="subcellular location">
    <subcellularLocation>
        <location evidence="1">Cytoplasm</location>
    </subcellularLocation>
</comment>
<comment type="similarity">
    <text evidence="1">Belongs to the TRAFAC class OBG-HflX-like GTPase superfamily. OBG GTPase family.</text>
</comment>
<comment type="sequence caution" evidence="4">
    <conflict type="erroneous initiation">
        <sequence resource="EMBL-CDS" id="ACA83159"/>
    </conflict>
    <text>Extended N-terminus.</text>
</comment>
<evidence type="ECO:0000255" key="1">
    <source>
        <dbReference type="HAMAP-Rule" id="MF_01454"/>
    </source>
</evidence>
<evidence type="ECO:0000255" key="2">
    <source>
        <dbReference type="PROSITE-ProRule" id="PRU01229"/>
    </source>
</evidence>
<evidence type="ECO:0000255" key="3">
    <source>
        <dbReference type="PROSITE-ProRule" id="PRU01231"/>
    </source>
</evidence>
<evidence type="ECO:0000305" key="4"/>
<dbReference type="EC" id="3.6.5.-" evidence="1"/>
<dbReference type="EMBL" id="DQ489736">
    <property type="protein sequence ID" value="ACA83159.1"/>
    <property type="status" value="ALT_INIT"/>
    <property type="molecule type" value="Genomic_DNA"/>
</dbReference>
<dbReference type="SMR" id="B1N057"/>
<dbReference type="STRING" id="349519.LCK_01335"/>
<dbReference type="KEGG" id="lci:LCK_01335"/>
<dbReference type="eggNOG" id="COG0536">
    <property type="taxonomic scope" value="Bacteria"/>
</dbReference>
<dbReference type="HOGENOM" id="CLU_011747_2_1_9"/>
<dbReference type="OrthoDB" id="9807318at2"/>
<dbReference type="Proteomes" id="UP000002166">
    <property type="component" value="Chromosome"/>
</dbReference>
<dbReference type="GO" id="GO:0005737">
    <property type="term" value="C:cytoplasm"/>
    <property type="evidence" value="ECO:0007669"/>
    <property type="project" value="UniProtKB-SubCell"/>
</dbReference>
<dbReference type="GO" id="GO:0005525">
    <property type="term" value="F:GTP binding"/>
    <property type="evidence" value="ECO:0007669"/>
    <property type="project" value="UniProtKB-UniRule"/>
</dbReference>
<dbReference type="GO" id="GO:0003924">
    <property type="term" value="F:GTPase activity"/>
    <property type="evidence" value="ECO:0007669"/>
    <property type="project" value="UniProtKB-UniRule"/>
</dbReference>
<dbReference type="GO" id="GO:0000287">
    <property type="term" value="F:magnesium ion binding"/>
    <property type="evidence" value="ECO:0007669"/>
    <property type="project" value="InterPro"/>
</dbReference>
<dbReference type="GO" id="GO:0042254">
    <property type="term" value="P:ribosome biogenesis"/>
    <property type="evidence" value="ECO:0007669"/>
    <property type="project" value="UniProtKB-UniRule"/>
</dbReference>
<dbReference type="CDD" id="cd01898">
    <property type="entry name" value="Obg"/>
    <property type="match status" value="1"/>
</dbReference>
<dbReference type="FunFam" id="2.70.210.12:FF:000001">
    <property type="entry name" value="GTPase Obg"/>
    <property type="match status" value="1"/>
</dbReference>
<dbReference type="Gene3D" id="3.30.300.350">
    <property type="entry name" value="GTP-binding protein OBG, C-terminal domain"/>
    <property type="match status" value="1"/>
</dbReference>
<dbReference type="Gene3D" id="2.70.210.12">
    <property type="entry name" value="GTP1/OBG domain"/>
    <property type="match status" value="1"/>
</dbReference>
<dbReference type="Gene3D" id="3.40.50.300">
    <property type="entry name" value="P-loop containing nucleotide triphosphate hydrolases"/>
    <property type="match status" value="1"/>
</dbReference>
<dbReference type="HAMAP" id="MF_01454">
    <property type="entry name" value="GTPase_Obg"/>
    <property type="match status" value="1"/>
</dbReference>
<dbReference type="InterPro" id="IPR031167">
    <property type="entry name" value="G_OBG"/>
</dbReference>
<dbReference type="InterPro" id="IPR006073">
    <property type="entry name" value="GTP-bd"/>
</dbReference>
<dbReference type="InterPro" id="IPR014100">
    <property type="entry name" value="GTP-bd_Obg/CgtA"/>
</dbReference>
<dbReference type="InterPro" id="IPR036346">
    <property type="entry name" value="GTP-bd_prot_GTP1/OBG_C_sf"/>
</dbReference>
<dbReference type="InterPro" id="IPR006074">
    <property type="entry name" value="GTP1-OBG_CS"/>
</dbReference>
<dbReference type="InterPro" id="IPR006169">
    <property type="entry name" value="GTP1_OBG_dom"/>
</dbReference>
<dbReference type="InterPro" id="IPR036726">
    <property type="entry name" value="GTP1_OBG_dom_sf"/>
</dbReference>
<dbReference type="InterPro" id="IPR045086">
    <property type="entry name" value="OBG_GTPase"/>
</dbReference>
<dbReference type="InterPro" id="IPR015349">
    <property type="entry name" value="OCT_dom"/>
</dbReference>
<dbReference type="InterPro" id="IPR027417">
    <property type="entry name" value="P-loop_NTPase"/>
</dbReference>
<dbReference type="NCBIfam" id="TIGR02729">
    <property type="entry name" value="Obg_CgtA"/>
    <property type="match status" value="1"/>
</dbReference>
<dbReference type="NCBIfam" id="TIGR03595">
    <property type="entry name" value="Obg_CgtA_exten"/>
    <property type="match status" value="1"/>
</dbReference>
<dbReference type="NCBIfam" id="NF008954">
    <property type="entry name" value="PRK12296.1"/>
    <property type="match status" value="1"/>
</dbReference>
<dbReference type="NCBIfam" id="NF008955">
    <property type="entry name" value="PRK12297.1"/>
    <property type="match status" value="1"/>
</dbReference>
<dbReference type="NCBIfam" id="NF008956">
    <property type="entry name" value="PRK12299.1"/>
    <property type="match status" value="1"/>
</dbReference>
<dbReference type="PANTHER" id="PTHR11702">
    <property type="entry name" value="DEVELOPMENTALLY REGULATED GTP-BINDING PROTEIN-RELATED"/>
    <property type="match status" value="1"/>
</dbReference>
<dbReference type="PANTHER" id="PTHR11702:SF31">
    <property type="entry name" value="MITOCHONDRIAL RIBOSOME-ASSOCIATED GTPASE 2"/>
    <property type="match status" value="1"/>
</dbReference>
<dbReference type="Pfam" id="PF09269">
    <property type="entry name" value="DUF1967"/>
    <property type="match status" value="1"/>
</dbReference>
<dbReference type="Pfam" id="PF01018">
    <property type="entry name" value="GTP1_OBG"/>
    <property type="match status" value="1"/>
</dbReference>
<dbReference type="Pfam" id="PF01926">
    <property type="entry name" value="MMR_HSR1"/>
    <property type="match status" value="1"/>
</dbReference>
<dbReference type="PIRSF" id="PIRSF002401">
    <property type="entry name" value="GTP_bd_Obg/CgtA"/>
    <property type="match status" value="1"/>
</dbReference>
<dbReference type="PRINTS" id="PR00326">
    <property type="entry name" value="GTP1OBG"/>
</dbReference>
<dbReference type="SUPFAM" id="SSF102741">
    <property type="entry name" value="Obg GTP-binding protein C-terminal domain"/>
    <property type="match status" value="1"/>
</dbReference>
<dbReference type="SUPFAM" id="SSF82051">
    <property type="entry name" value="Obg GTP-binding protein N-terminal domain"/>
    <property type="match status" value="1"/>
</dbReference>
<dbReference type="SUPFAM" id="SSF52540">
    <property type="entry name" value="P-loop containing nucleoside triphosphate hydrolases"/>
    <property type="match status" value="1"/>
</dbReference>
<dbReference type="PROSITE" id="PS51710">
    <property type="entry name" value="G_OBG"/>
    <property type="match status" value="1"/>
</dbReference>
<dbReference type="PROSITE" id="PS00905">
    <property type="entry name" value="GTP1_OBG"/>
    <property type="match status" value="1"/>
</dbReference>
<dbReference type="PROSITE" id="PS51883">
    <property type="entry name" value="OBG"/>
    <property type="match status" value="1"/>
</dbReference>
<dbReference type="PROSITE" id="PS51881">
    <property type="entry name" value="OCT"/>
    <property type="match status" value="1"/>
</dbReference>
<sequence length="439" mass="47995">MAFVDQAEIEVKAGKGGDGIVSFRHEKFVAMGGPFGGDGGHGGSIIFKVDEGLRTLMDFRYNRHFKAQPGGNGGTKGMTGASAEDRYIKVPQGTTVKDVETGEVLGDLLENGQELVVVKGGRGGRGNIHFATPANPAPELSENGEPGQVRKLKLELKVLADVGLVGFPSAGKSTLLSVVSNAKPKVAAYHFTTLSPNIGMVRLDDARDFVMADLPGLIEGASQGVGLGFQFLRHVERTRVVLHLVDMSGIEGNDPYTQYRKILDELGQYDETILNRPHIVVPTKMDMPDSEENLVKFRQEVAADSGLPVQPEIMPISALTREGVQPLMRLTADLLATAPVPESYRPVVEKVSNDKTYDFKPEQHNFTVEWSEETEEWVIGGAEIEKLFLMTNIQRDATIMRFGRQLRHMGVDDALRKAGAKDGDDVRINNSDFVFEFSD</sequence>